<comment type="catalytic activity">
    <reaction evidence="1">
        <text>agmatine + H2O = N-carbamoylputrescine + NH4(+)</text>
        <dbReference type="Rhea" id="RHEA:18037"/>
        <dbReference type="ChEBI" id="CHEBI:15377"/>
        <dbReference type="ChEBI" id="CHEBI:28938"/>
        <dbReference type="ChEBI" id="CHEBI:58145"/>
        <dbReference type="ChEBI" id="CHEBI:58318"/>
        <dbReference type="EC" id="3.5.3.12"/>
    </reaction>
</comment>
<comment type="similarity">
    <text evidence="1">Belongs to the agmatine deiminase family.</text>
</comment>
<evidence type="ECO:0000255" key="1">
    <source>
        <dbReference type="HAMAP-Rule" id="MF_01841"/>
    </source>
</evidence>
<protein>
    <recommendedName>
        <fullName evidence="1">Putative agmatine deiminase</fullName>
        <ecNumber evidence="1">3.5.3.12</ecNumber>
    </recommendedName>
    <alternativeName>
        <fullName evidence="1">Agmatine iminohydrolase</fullName>
    </alternativeName>
</protein>
<proteinExistence type="inferred from homology"/>
<name>AGUA_STRCO</name>
<organism>
    <name type="scientific">Streptomyces coelicolor (strain ATCC BAA-471 / A3(2) / M145)</name>
    <dbReference type="NCBI Taxonomy" id="100226"/>
    <lineage>
        <taxon>Bacteria</taxon>
        <taxon>Bacillati</taxon>
        <taxon>Actinomycetota</taxon>
        <taxon>Actinomycetes</taxon>
        <taxon>Kitasatosporales</taxon>
        <taxon>Streptomycetaceae</taxon>
        <taxon>Streptomyces</taxon>
        <taxon>Streptomyces albidoflavus group</taxon>
    </lineage>
</organism>
<feature type="chain" id="PRO_0000194343" description="Putative agmatine deiminase">
    <location>
        <begin position="1"/>
        <end position="339"/>
    </location>
</feature>
<feature type="active site" description="Amidino-cysteine intermediate" evidence="1">
    <location>
        <position position="331"/>
    </location>
</feature>
<keyword id="KW-0378">Hydrolase</keyword>
<keyword id="KW-1185">Reference proteome</keyword>
<gene>
    <name evidence="1" type="primary">aguA</name>
    <name type="ordered locus">SCO5527</name>
    <name type="ORF">SC1C2.08</name>
</gene>
<reference key="1">
    <citation type="journal article" date="2002" name="Nature">
        <title>Complete genome sequence of the model actinomycete Streptomyces coelicolor A3(2).</title>
        <authorList>
            <person name="Bentley S.D."/>
            <person name="Chater K.F."/>
            <person name="Cerdeno-Tarraga A.-M."/>
            <person name="Challis G.L."/>
            <person name="Thomson N.R."/>
            <person name="James K.D."/>
            <person name="Harris D.E."/>
            <person name="Quail M.A."/>
            <person name="Kieser H."/>
            <person name="Harper D."/>
            <person name="Bateman A."/>
            <person name="Brown S."/>
            <person name="Chandra G."/>
            <person name="Chen C.W."/>
            <person name="Collins M."/>
            <person name="Cronin A."/>
            <person name="Fraser A."/>
            <person name="Goble A."/>
            <person name="Hidalgo J."/>
            <person name="Hornsby T."/>
            <person name="Howarth S."/>
            <person name="Huang C.-H."/>
            <person name="Kieser T."/>
            <person name="Larke L."/>
            <person name="Murphy L.D."/>
            <person name="Oliver K."/>
            <person name="O'Neil S."/>
            <person name="Rabbinowitsch E."/>
            <person name="Rajandream M.A."/>
            <person name="Rutherford K.M."/>
            <person name="Rutter S."/>
            <person name="Seeger K."/>
            <person name="Saunders D."/>
            <person name="Sharp S."/>
            <person name="Squares R."/>
            <person name="Squares S."/>
            <person name="Taylor K."/>
            <person name="Warren T."/>
            <person name="Wietzorrek A."/>
            <person name="Woodward J.R."/>
            <person name="Barrell B.G."/>
            <person name="Parkhill J."/>
            <person name="Hopwood D.A."/>
        </authorList>
    </citation>
    <scope>NUCLEOTIDE SEQUENCE [LARGE SCALE GENOMIC DNA]</scope>
    <source>
        <strain>ATCC BAA-471 / A3(2) / M145</strain>
    </source>
</reference>
<sequence length="339" mass="37142">MTFRMPPEWAPHERTWMAWPGPNATFTDAEELAGARAAWASVARAVRRFEPVTMVHGPGQAATARELLGPDVDLVERELDDAWMRDIGPTFVTDGRGGLAAVDWVFNGWGAQDWARWEHDAEIARHVADLAAAPVLSSPLVNEGGAIHVDGEGTVLLTDTVQLGSGRNPGWSREEVEAEIHAKLGTTTAIWLPHGLAGDYGRYGTQGHVDIVAAFARPGTVVVHSQRDPRHPDHERSQLYLEILRGRTDARGRRLEVVEVPAPTVLKDEEGEWADYSYINHYVCNGGVVLCAFGDPNDELAAGIFRRLFPERTVTLVDARTIFAGGGGIHCITQQQPRT</sequence>
<accession>O86509</accession>
<dbReference type="EC" id="3.5.3.12" evidence="1"/>
<dbReference type="EMBL" id="AL939124">
    <property type="protein sequence ID" value="CAA19975.1"/>
    <property type="molecule type" value="Genomic_DNA"/>
</dbReference>
<dbReference type="PIR" id="T29057">
    <property type="entry name" value="T29057"/>
</dbReference>
<dbReference type="RefSeq" id="NP_629661.1">
    <property type="nucleotide sequence ID" value="NC_003888.3"/>
</dbReference>
<dbReference type="RefSeq" id="WP_003973469.1">
    <property type="nucleotide sequence ID" value="NZ_VNID01000011.1"/>
</dbReference>
<dbReference type="SMR" id="O86509"/>
<dbReference type="STRING" id="100226.gene:17763179"/>
<dbReference type="PaxDb" id="100226-SCO5527"/>
<dbReference type="KEGG" id="sco:SCO5527"/>
<dbReference type="PATRIC" id="fig|100226.15.peg.5614"/>
<dbReference type="eggNOG" id="COG2957">
    <property type="taxonomic scope" value="Bacteria"/>
</dbReference>
<dbReference type="HOGENOM" id="CLU_037682_0_0_11"/>
<dbReference type="InParanoid" id="O86509"/>
<dbReference type="OrthoDB" id="9808013at2"/>
<dbReference type="PhylomeDB" id="O86509"/>
<dbReference type="Proteomes" id="UP000001973">
    <property type="component" value="Chromosome"/>
</dbReference>
<dbReference type="GO" id="GO:0047632">
    <property type="term" value="F:agmatine deiminase activity"/>
    <property type="evidence" value="ECO:0007669"/>
    <property type="project" value="UniProtKB-UniRule"/>
</dbReference>
<dbReference type="GO" id="GO:0004668">
    <property type="term" value="F:protein-arginine deiminase activity"/>
    <property type="evidence" value="ECO:0007669"/>
    <property type="project" value="InterPro"/>
</dbReference>
<dbReference type="GO" id="GO:0009446">
    <property type="term" value="P:putrescine biosynthetic process"/>
    <property type="evidence" value="ECO:0007669"/>
    <property type="project" value="InterPro"/>
</dbReference>
<dbReference type="Gene3D" id="3.75.10.10">
    <property type="entry name" value="L-arginine/glycine Amidinotransferase, Chain A"/>
    <property type="match status" value="1"/>
</dbReference>
<dbReference type="HAMAP" id="MF_01841">
    <property type="entry name" value="Agmatine_deimin"/>
    <property type="match status" value="1"/>
</dbReference>
<dbReference type="InterPro" id="IPR017754">
    <property type="entry name" value="Agmatine_deiminase"/>
</dbReference>
<dbReference type="InterPro" id="IPR007466">
    <property type="entry name" value="Peptidyl-Arg-deiminase_porph"/>
</dbReference>
<dbReference type="PANTHER" id="PTHR31377">
    <property type="entry name" value="AGMATINE DEIMINASE-RELATED"/>
    <property type="match status" value="1"/>
</dbReference>
<dbReference type="PANTHER" id="PTHR31377:SF0">
    <property type="entry name" value="AGMATINE DEIMINASE-RELATED"/>
    <property type="match status" value="1"/>
</dbReference>
<dbReference type="Pfam" id="PF04371">
    <property type="entry name" value="PAD_porph"/>
    <property type="match status" value="1"/>
</dbReference>
<dbReference type="SUPFAM" id="SSF55909">
    <property type="entry name" value="Pentein"/>
    <property type="match status" value="1"/>
</dbReference>